<name>UBE2C_XENLA</name>
<keyword id="KW-0067">ATP-binding</keyword>
<keyword id="KW-0131">Cell cycle</keyword>
<keyword id="KW-0132">Cell division</keyword>
<keyword id="KW-0903">Direct protein sequencing</keyword>
<keyword id="KW-0498">Mitosis</keyword>
<keyword id="KW-0547">Nucleotide-binding</keyword>
<keyword id="KW-1185">Reference proteome</keyword>
<keyword id="KW-0808">Transferase</keyword>
<keyword id="KW-0832">Ubl conjugation</keyword>
<keyword id="KW-0833">Ubl conjugation pathway</keyword>
<sequence length="179" mass="19897">MASQNVDPAAASSVASRKGQESGTSAARGSVGKRLQQELMTLMMSGDKGISAFPESDNLFKWIGTIDGAVGTVYEDLRYKLSLEFPSGYPYNAPTVKFVTPCFHPNVDSHGNICLDILKDKWSALYDVRTILLSLQSLLGEPNNESPLNPYAAELWQNQTAYKKHLHEQYQKQVREKEI</sequence>
<gene>
    <name type="primary">ube2c</name>
    <name type="synonym">ubch10</name>
    <name type="synonym">ubcx</name>
</gene>
<accession>P56616</accession>
<accession>Q6DJN4</accession>
<feature type="chain" id="PRO_0000082562" description="Ubiquitin-conjugating enzyme E2 C">
    <location>
        <begin position="1"/>
        <end position="179"/>
    </location>
</feature>
<feature type="domain" description="UBC core" evidence="2">
    <location>
        <begin position="30"/>
        <end position="179"/>
    </location>
</feature>
<feature type="region of interest" description="Disordered" evidence="4">
    <location>
        <begin position="1"/>
        <end position="31"/>
    </location>
</feature>
<feature type="active site" description="Glycyl thioester intermediate" evidence="2 3">
    <location>
        <position position="114"/>
    </location>
</feature>
<comment type="function">
    <text evidence="2">Catalyzes the covalent attachment of ubiquitin to other proteins. Acts as an essential factor of the anaphase promoting complex/cyclosome (APC/C), a cell cycle-regulated ubiquitin ligase that controls progression through mitosis. Acts by initiating 'Lys-11'-linked polyubiquitin chains on APC/C substrates, leading to the degradation of APC/C substrates by the proteasome and promoting mitotic exit.</text>
</comment>
<comment type="catalytic activity">
    <reaction evidence="1 2 3">
        <text>S-ubiquitinyl-[E1 ubiquitin-activating enzyme]-L-cysteine + [E2 ubiquitin-conjugating enzyme]-L-cysteine = [E1 ubiquitin-activating enzyme]-L-cysteine + S-ubiquitinyl-[E2 ubiquitin-conjugating enzyme]-L-cysteine.</text>
        <dbReference type="EC" id="2.3.2.23"/>
    </reaction>
</comment>
<comment type="catalytic activity">
    <reaction evidence="1">
        <text>S-ubiquitinyl-[E1 ubiquitin-activating enzyme]-L-cysteine + [acceptor protein]-L-lysine = [E1 ubiquitin-activating enzyme]-L-cysteine + N(6)-monoubiquitinyl-[acceptor protein]-L-lysine.</text>
        <dbReference type="EC" id="2.3.2.24"/>
    </reaction>
</comment>
<comment type="pathway">
    <text evidence="2">Protein modification; protein ubiquitination.</text>
</comment>
<comment type="subunit">
    <text evidence="1">Component of the APC/C complex.</text>
</comment>
<comment type="PTM">
    <text evidence="1">Autoubiquitinated by the APC/C complex, leading to its degradation by the proteasome.</text>
</comment>
<comment type="similarity">
    <text evidence="2">Belongs to the ubiquitin-conjugating enzyme family.</text>
</comment>
<protein>
    <recommendedName>
        <fullName>Ubiquitin-conjugating enzyme E2 C</fullName>
        <ecNumber>2.3.2.23</ecNumber>
    </recommendedName>
    <alternativeName>
        <fullName>(E3-independent) E2 ubiquitin-conjugating enzyme C</fullName>
        <ecNumber>2.3.2.24</ecNumber>
    </alternativeName>
    <alternativeName>
        <fullName>E2 ubiquitin-conjugating enzyme C</fullName>
    </alternativeName>
    <alternativeName>
        <fullName>UBC-X</fullName>
    </alternativeName>
    <alternativeName>
        <fullName>Ubiquitin carrier protein C</fullName>
    </alternativeName>
    <alternativeName>
        <fullName>Ubiquitin-protein ligase C</fullName>
    </alternativeName>
</protein>
<organism>
    <name type="scientific">Xenopus laevis</name>
    <name type="common">African clawed frog</name>
    <dbReference type="NCBI Taxonomy" id="8355"/>
    <lineage>
        <taxon>Eukaryota</taxon>
        <taxon>Metazoa</taxon>
        <taxon>Chordata</taxon>
        <taxon>Craniata</taxon>
        <taxon>Vertebrata</taxon>
        <taxon>Euteleostomi</taxon>
        <taxon>Amphibia</taxon>
        <taxon>Batrachia</taxon>
        <taxon>Anura</taxon>
        <taxon>Pipoidea</taxon>
        <taxon>Pipidae</taxon>
        <taxon>Xenopodinae</taxon>
        <taxon>Xenopus</taxon>
        <taxon>Xenopus</taxon>
    </lineage>
</organism>
<reference key="1">
    <citation type="journal article" date="1996" name="Curr. Biol.">
        <title>Identification of a novel ubiquitin-conjugating enzyme involved in mitotic cyclin degradation.</title>
        <authorList>
            <person name="Yu H."/>
            <person name="King R.W."/>
            <person name="Peters J.-M."/>
            <person name="Kirschner M.W."/>
        </authorList>
    </citation>
    <scope>NUCLEOTIDE SEQUENCE</scope>
    <scope>PROTEIN SEQUENCE OF 63-80 AND 99-108</scope>
</reference>
<reference key="2">
    <citation type="submission" date="2004-06" db="EMBL/GenBank/DDBJ databases">
        <authorList>
            <consortium name="NIH - Xenopus Gene Collection (XGC) project"/>
        </authorList>
    </citation>
    <scope>NUCLEOTIDE SEQUENCE [LARGE SCALE MRNA]</scope>
    <source>
        <tissue>Kidney</tissue>
    </source>
</reference>
<proteinExistence type="evidence at protein level"/>
<dbReference type="EC" id="2.3.2.23"/>
<dbReference type="EC" id="2.3.2.24"/>
<dbReference type="EMBL" id="BC075141">
    <property type="protein sequence ID" value="AAH75141.1"/>
    <property type="molecule type" value="mRNA"/>
</dbReference>
<dbReference type="RefSeq" id="NP_001086346.1">
    <property type="nucleotide sequence ID" value="NM_001092877.1"/>
</dbReference>
<dbReference type="SMR" id="P56616"/>
<dbReference type="BioGRID" id="102938">
    <property type="interactions" value="1"/>
</dbReference>
<dbReference type="DNASU" id="444775"/>
<dbReference type="GeneID" id="444775"/>
<dbReference type="KEGG" id="xla:444775"/>
<dbReference type="AGR" id="Xenbase:XB-GENE-17339936"/>
<dbReference type="CTD" id="444775"/>
<dbReference type="Xenbase" id="XB-GENE-17339936">
    <property type="gene designation" value="ube2c.L"/>
</dbReference>
<dbReference type="OMA" id="NDNIMKW"/>
<dbReference type="OrthoDB" id="10253686at2759"/>
<dbReference type="UniPathway" id="UPA00143"/>
<dbReference type="Proteomes" id="UP000186698">
    <property type="component" value="Chromosome 9_10L"/>
</dbReference>
<dbReference type="Bgee" id="444775">
    <property type="expression patterns" value="Expressed in oocyte and 19 other cell types or tissues"/>
</dbReference>
<dbReference type="GO" id="GO:0005680">
    <property type="term" value="C:anaphase-promoting complex"/>
    <property type="evidence" value="ECO:0000250"/>
    <property type="project" value="UniProtKB"/>
</dbReference>
<dbReference type="GO" id="GO:0005524">
    <property type="term" value="F:ATP binding"/>
    <property type="evidence" value="ECO:0007669"/>
    <property type="project" value="UniProtKB-KW"/>
</dbReference>
<dbReference type="GO" id="GO:0061631">
    <property type="term" value="F:ubiquitin conjugating enzyme activity"/>
    <property type="evidence" value="ECO:0007669"/>
    <property type="project" value="UniProtKB-EC"/>
</dbReference>
<dbReference type="GO" id="GO:0031145">
    <property type="term" value="P:anaphase-promoting complex-dependent catabolic process"/>
    <property type="evidence" value="ECO:0000250"/>
    <property type="project" value="UniProtKB"/>
</dbReference>
<dbReference type="GO" id="GO:0051301">
    <property type="term" value="P:cell division"/>
    <property type="evidence" value="ECO:0007669"/>
    <property type="project" value="UniProtKB-KW"/>
</dbReference>
<dbReference type="GO" id="GO:0010458">
    <property type="term" value="P:exit from mitosis"/>
    <property type="evidence" value="ECO:0000250"/>
    <property type="project" value="UniProtKB"/>
</dbReference>
<dbReference type="GO" id="GO:0010994">
    <property type="term" value="P:free ubiquitin chain polymerization"/>
    <property type="evidence" value="ECO:0000250"/>
    <property type="project" value="UniProtKB"/>
</dbReference>
<dbReference type="GO" id="GO:0070979">
    <property type="term" value="P:protein K11-linked ubiquitination"/>
    <property type="evidence" value="ECO:0000250"/>
    <property type="project" value="UniProtKB"/>
</dbReference>
<dbReference type="GO" id="GO:0006511">
    <property type="term" value="P:ubiquitin-dependent protein catabolic process"/>
    <property type="evidence" value="ECO:0000250"/>
    <property type="project" value="UniProtKB"/>
</dbReference>
<dbReference type="CDD" id="cd23791">
    <property type="entry name" value="UBCc_UBE2C"/>
    <property type="match status" value="1"/>
</dbReference>
<dbReference type="FunFam" id="3.10.110.10:FF:000039">
    <property type="entry name" value="Ubiquitin-conjugating enzyme E2 C"/>
    <property type="match status" value="1"/>
</dbReference>
<dbReference type="Gene3D" id="3.10.110.10">
    <property type="entry name" value="Ubiquitin Conjugating Enzyme"/>
    <property type="match status" value="1"/>
</dbReference>
<dbReference type="InterPro" id="IPR050113">
    <property type="entry name" value="Ub_conjugating_enzyme"/>
</dbReference>
<dbReference type="InterPro" id="IPR000608">
    <property type="entry name" value="UBQ-conjugat_E2_core"/>
</dbReference>
<dbReference type="InterPro" id="IPR023313">
    <property type="entry name" value="UBQ-conjugating_AS"/>
</dbReference>
<dbReference type="InterPro" id="IPR016135">
    <property type="entry name" value="UBQ-conjugating_enzyme/RWD"/>
</dbReference>
<dbReference type="PANTHER" id="PTHR24067">
    <property type="entry name" value="UBIQUITIN-CONJUGATING ENZYME E2"/>
    <property type="match status" value="1"/>
</dbReference>
<dbReference type="Pfam" id="PF00179">
    <property type="entry name" value="UQ_con"/>
    <property type="match status" value="1"/>
</dbReference>
<dbReference type="SMART" id="SM00212">
    <property type="entry name" value="UBCc"/>
    <property type="match status" value="1"/>
</dbReference>
<dbReference type="SUPFAM" id="SSF54495">
    <property type="entry name" value="UBC-like"/>
    <property type="match status" value="1"/>
</dbReference>
<dbReference type="PROSITE" id="PS00183">
    <property type="entry name" value="UBC_1"/>
    <property type="match status" value="1"/>
</dbReference>
<dbReference type="PROSITE" id="PS50127">
    <property type="entry name" value="UBC_2"/>
    <property type="match status" value="1"/>
</dbReference>
<evidence type="ECO:0000250" key="1">
    <source>
        <dbReference type="UniProtKB" id="O00762"/>
    </source>
</evidence>
<evidence type="ECO:0000255" key="2">
    <source>
        <dbReference type="PROSITE-ProRule" id="PRU00388"/>
    </source>
</evidence>
<evidence type="ECO:0000255" key="3">
    <source>
        <dbReference type="PROSITE-ProRule" id="PRU10133"/>
    </source>
</evidence>
<evidence type="ECO:0000256" key="4">
    <source>
        <dbReference type="SAM" id="MobiDB-lite"/>
    </source>
</evidence>